<accession>A7FFI0</accession>
<evidence type="ECO:0000255" key="1">
    <source>
        <dbReference type="HAMAP-Rule" id="MF_00406"/>
    </source>
</evidence>
<gene>
    <name evidence="1" type="primary">fabZ</name>
    <name type="ordered locus">YpsIP31758_1024</name>
</gene>
<keyword id="KW-0963">Cytoplasm</keyword>
<keyword id="KW-0441">Lipid A biosynthesis</keyword>
<keyword id="KW-0444">Lipid biosynthesis</keyword>
<keyword id="KW-0443">Lipid metabolism</keyword>
<keyword id="KW-0456">Lyase</keyword>
<sequence>MTTDTHTLHIEEILDLLPHRFPFLLVDRVLDFEEGKFLRAVKNVSFNEPFFQGHFPGKPIFPGVLILEAMAQATGILAFKSRGKLEPGELYYFAGIDEARFKRPVVPGDQMIMEVEFVKERRGLTRFTGVAKVDGEIVCTATMMCARSKPAAPAESVVVKPDVVKPDVVNPVVKES</sequence>
<name>FABZ_YERP3</name>
<organism>
    <name type="scientific">Yersinia pseudotuberculosis serotype O:1b (strain IP 31758)</name>
    <dbReference type="NCBI Taxonomy" id="349747"/>
    <lineage>
        <taxon>Bacteria</taxon>
        <taxon>Pseudomonadati</taxon>
        <taxon>Pseudomonadota</taxon>
        <taxon>Gammaproteobacteria</taxon>
        <taxon>Enterobacterales</taxon>
        <taxon>Yersiniaceae</taxon>
        <taxon>Yersinia</taxon>
    </lineage>
</organism>
<feature type="chain" id="PRO_1000060834" description="3-hydroxyacyl-[acyl-carrier-protein] dehydratase FabZ">
    <location>
        <begin position="1"/>
        <end position="176"/>
    </location>
</feature>
<feature type="active site" evidence="1">
    <location>
        <position position="54"/>
    </location>
</feature>
<reference key="1">
    <citation type="journal article" date="2007" name="PLoS Genet.">
        <title>The complete genome sequence of Yersinia pseudotuberculosis IP31758, the causative agent of Far East scarlet-like fever.</title>
        <authorList>
            <person name="Eppinger M."/>
            <person name="Rosovitz M.J."/>
            <person name="Fricke W.F."/>
            <person name="Rasko D.A."/>
            <person name="Kokorina G."/>
            <person name="Fayolle C."/>
            <person name="Lindler L.E."/>
            <person name="Carniel E."/>
            <person name="Ravel J."/>
        </authorList>
    </citation>
    <scope>NUCLEOTIDE SEQUENCE [LARGE SCALE GENOMIC DNA]</scope>
    <source>
        <strain>IP 31758</strain>
    </source>
</reference>
<dbReference type="EC" id="4.2.1.59" evidence="1"/>
<dbReference type="EMBL" id="CP000720">
    <property type="protein sequence ID" value="ABS48232.1"/>
    <property type="molecule type" value="Genomic_DNA"/>
</dbReference>
<dbReference type="RefSeq" id="WP_002217656.1">
    <property type="nucleotide sequence ID" value="NC_009708.1"/>
</dbReference>
<dbReference type="SMR" id="A7FFI0"/>
<dbReference type="KEGG" id="ypi:YpsIP31758_1024"/>
<dbReference type="HOGENOM" id="CLU_078912_1_0_6"/>
<dbReference type="Proteomes" id="UP000002412">
    <property type="component" value="Chromosome"/>
</dbReference>
<dbReference type="GO" id="GO:0005737">
    <property type="term" value="C:cytoplasm"/>
    <property type="evidence" value="ECO:0007669"/>
    <property type="project" value="UniProtKB-SubCell"/>
</dbReference>
<dbReference type="GO" id="GO:0016020">
    <property type="term" value="C:membrane"/>
    <property type="evidence" value="ECO:0007669"/>
    <property type="project" value="GOC"/>
</dbReference>
<dbReference type="GO" id="GO:0019171">
    <property type="term" value="F:(3R)-hydroxyacyl-[acyl-carrier-protein] dehydratase activity"/>
    <property type="evidence" value="ECO:0007669"/>
    <property type="project" value="UniProtKB-EC"/>
</dbReference>
<dbReference type="GO" id="GO:0006633">
    <property type="term" value="P:fatty acid biosynthetic process"/>
    <property type="evidence" value="ECO:0007669"/>
    <property type="project" value="UniProtKB-UniRule"/>
</dbReference>
<dbReference type="GO" id="GO:0009245">
    <property type="term" value="P:lipid A biosynthetic process"/>
    <property type="evidence" value="ECO:0007669"/>
    <property type="project" value="UniProtKB-UniRule"/>
</dbReference>
<dbReference type="CDD" id="cd01288">
    <property type="entry name" value="FabZ"/>
    <property type="match status" value="1"/>
</dbReference>
<dbReference type="FunFam" id="3.10.129.10:FF:000001">
    <property type="entry name" value="3-hydroxyacyl-[acyl-carrier-protein] dehydratase FabZ"/>
    <property type="match status" value="1"/>
</dbReference>
<dbReference type="Gene3D" id="3.10.129.10">
    <property type="entry name" value="Hotdog Thioesterase"/>
    <property type="match status" value="1"/>
</dbReference>
<dbReference type="HAMAP" id="MF_00406">
    <property type="entry name" value="FabZ"/>
    <property type="match status" value="1"/>
</dbReference>
<dbReference type="InterPro" id="IPR013114">
    <property type="entry name" value="FabA_FabZ"/>
</dbReference>
<dbReference type="InterPro" id="IPR010084">
    <property type="entry name" value="FabZ"/>
</dbReference>
<dbReference type="InterPro" id="IPR029069">
    <property type="entry name" value="HotDog_dom_sf"/>
</dbReference>
<dbReference type="NCBIfam" id="TIGR01750">
    <property type="entry name" value="fabZ"/>
    <property type="match status" value="1"/>
</dbReference>
<dbReference type="NCBIfam" id="NF000582">
    <property type="entry name" value="PRK00006.1"/>
    <property type="match status" value="1"/>
</dbReference>
<dbReference type="PANTHER" id="PTHR30272">
    <property type="entry name" value="3-HYDROXYACYL-[ACYL-CARRIER-PROTEIN] DEHYDRATASE"/>
    <property type="match status" value="1"/>
</dbReference>
<dbReference type="PANTHER" id="PTHR30272:SF1">
    <property type="entry name" value="3-HYDROXYACYL-[ACYL-CARRIER-PROTEIN] DEHYDRATASE"/>
    <property type="match status" value="1"/>
</dbReference>
<dbReference type="Pfam" id="PF07977">
    <property type="entry name" value="FabA"/>
    <property type="match status" value="1"/>
</dbReference>
<dbReference type="SUPFAM" id="SSF54637">
    <property type="entry name" value="Thioesterase/thiol ester dehydrase-isomerase"/>
    <property type="match status" value="1"/>
</dbReference>
<comment type="function">
    <text evidence="1">Involved in unsaturated fatty acids biosynthesis. Catalyzes the dehydration of short chain beta-hydroxyacyl-ACPs and long chain saturated and unsaturated beta-hydroxyacyl-ACPs.</text>
</comment>
<comment type="catalytic activity">
    <reaction evidence="1">
        <text>a (3R)-hydroxyacyl-[ACP] = a (2E)-enoyl-[ACP] + H2O</text>
        <dbReference type="Rhea" id="RHEA:13097"/>
        <dbReference type="Rhea" id="RHEA-COMP:9925"/>
        <dbReference type="Rhea" id="RHEA-COMP:9945"/>
        <dbReference type="ChEBI" id="CHEBI:15377"/>
        <dbReference type="ChEBI" id="CHEBI:78784"/>
        <dbReference type="ChEBI" id="CHEBI:78827"/>
        <dbReference type="EC" id="4.2.1.59"/>
    </reaction>
</comment>
<comment type="subcellular location">
    <subcellularLocation>
        <location evidence="1">Cytoplasm</location>
    </subcellularLocation>
</comment>
<comment type="similarity">
    <text evidence="1">Belongs to the thioester dehydratase family. FabZ subfamily.</text>
</comment>
<proteinExistence type="inferred from homology"/>
<protein>
    <recommendedName>
        <fullName evidence="1">3-hydroxyacyl-[acyl-carrier-protein] dehydratase FabZ</fullName>
        <ecNumber evidence="1">4.2.1.59</ecNumber>
    </recommendedName>
    <alternativeName>
        <fullName evidence="1">(3R)-hydroxymyristoyl-[acyl-carrier-protein] dehydratase</fullName>
        <shortName evidence="1">(3R)-hydroxymyristoyl-ACP dehydrase</shortName>
    </alternativeName>
    <alternativeName>
        <fullName evidence="1">Beta-hydroxyacyl-ACP dehydratase</fullName>
    </alternativeName>
</protein>